<gene>
    <name evidence="1" type="primary">pdxT</name>
    <name type="ordered locus">Mbar_A3580</name>
</gene>
<protein>
    <recommendedName>
        <fullName evidence="1">Pyridoxal 5'-phosphate synthase subunit PdxT</fullName>
        <ecNumber evidence="1">4.3.3.6</ecNumber>
    </recommendedName>
    <alternativeName>
        <fullName evidence="1">Pdx2</fullName>
    </alternativeName>
    <alternativeName>
        <fullName evidence="1">Pyridoxal 5'-phosphate synthase glutaminase subunit</fullName>
        <ecNumber evidence="1">3.5.1.2</ecNumber>
    </alternativeName>
</protein>
<keyword id="KW-0315">Glutamine amidotransferase</keyword>
<keyword id="KW-0378">Hydrolase</keyword>
<keyword id="KW-0456">Lyase</keyword>
<keyword id="KW-0663">Pyridoxal phosphate</keyword>
<reference key="1">
    <citation type="journal article" date="2006" name="J. Bacteriol.">
        <title>The Methanosarcina barkeri genome: comparative analysis with Methanosarcina acetivorans and Methanosarcina mazei reveals extensive rearrangement within methanosarcinal genomes.</title>
        <authorList>
            <person name="Maeder D.L."/>
            <person name="Anderson I."/>
            <person name="Brettin T.S."/>
            <person name="Bruce D.C."/>
            <person name="Gilna P."/>
            <person name="Han C.S."/>
            <person name="Lapidus A."/>
            <person name="Metcalf W.W."/>
            <person name="Saunders E."/>
            <person name="Tapia R."/>
            <person name="Sowers K.R."/>
        </authorList>
    </citation>
    <scope>NUCLEOTIDE SEQUENCE [LARGE SCALE GENOMIC DNA]</scope>
    <source>
        <strain>Fusaro / DSM 804</strain>
    </source>
</reference>
<sequence>MKIGVIAIQGAVSEHIDALRRALKERGMSAEVVAVKHKGVIPECGGIVIPGGESTTLCRLLAREGIAEEIKDASARGVPILGTCAGLIVLSKEGDEQVEKTSQELLGIMDTKVNRNAFGRQRDSFEAELEVEILDSPFTGVFIRAPGIVSCGPEVRVLSRLDDLIIAAEQGNVLALAFHPELTEDLRIHQYFLDKIFKNA</sequence>
<comment type="function">
    <text evidence="1">Catalyzes the hydrolysis of glutamine to glutamate and ammonia as part of the biosynthesis of pyridoxal 5'-phosphate. The resulting ammonia molecule is channeled to the active site of PdxS.</text>
</comment>
<comment type="catalytic activity">
    <reaction evidence="1">
        <text>aldehydo-D-ribose 5-phosphate + D-glyceraldehyde 3-phosphate + L-glutamine = pyridoxal 5'-phosphate + L-glutamate + phosphate + 3 H2O + H(+)</text>
        <dbReference type="Rhea" id="RHEA:31507"/>
        <dbReference type="ChEBI" id="CHEBI:15377"/>
        <dbReference type="ChEBI" id="CHEBI:15378"/>
        <dbReference type="ChEBI" id="CHEBI:29985"/>
        <dbReference type="ChEBI" id="CHEBI:43474"/>
        <dbReference type="ChEBI" id="CHEBI:58273"/>
        <dbReference type="ChEBI" id="CHEBI:58359"/>
        <dbReference type="ChEBI" id="CHEBI:59776"/>
        <dbReference type="ChEBI" id="CHEBI:597326"/>
        <dbReference type="EC" id="4.3.3.6"/>
    </reaction>
</comment>
<comment type="catalytic activity">
    <reaction evidence="1">
        <text>L-glutamine + H2O = L-glutamate + NH4(+)</text>
        <dbReference type="Rhea" id="RHEA:15889"/>
        <dbReference type="ChEBI" id="CHEBI:15377"/>
        <dbReference type="ChEBI" id="CHEBI:28938"/>
        <dbReference type="ChEBI" id="CHEBI:29985"/>
        <dbReference type="ChEBI" id="CHEBI:58359"/>
        <dbReference type="EC" id="3.5.1.2"/>
    </reaction>
</comment>
<comment type="pathway">
    <text evidence="1">Cofactor biosynthesis; pyridoxal 5'-phosphate biosynthesis.</text>
</comment>
<comment type="subunit">
    <text evidence="1">In the presence of PdxS, forms a dodecamer of heterodimers. Only shows activity in the heterodimer.</text>
</comment>
<comment type="similarity">
    <text evidence="1">Belongs to the glutaminase PdxT/SNO family.</text>
</comment>
<dbReference type="EC" id="4.3.3.6" evidence="1"/>
<dbReference type="EC" id="3.5.1.2" evidence="1"/>
<dbReference type="EMBL" id="CP000099">
    <property type="protein sequence ID" value="AAZ72448.1"/>
    <property type="molecule type" value="Genomic_DNA"/>
</dbReference>
<dbReference type="SMR" id="Q465J4"/>
<dbReference type="STRING" id="269797.Mbar_A3580"/>
<dbReference type="PaxDb" id="269797-Mbar_A3580"/>
<dbReference type="KEGG" id="mba:Mbar_A3580"/>
<dbReference type="eggNOG" id="arCOG00034">
    <property type="taxonomic scope" value="Archaea"/>
</dbReference>
<dbReference type="HOGENOM" id="CLU_069674_2_0_2"/>
<dbReference type="OrthoDB" id="26717at2157"/>
<dbReference type="UniPathway" id="UPA00245"/>
<dbReference type="GO" id="GO:0005829">
    <property type="term" value="C:cytosol"/>
    <property type="evidence" value="ECO:0007669"/>
    <property type="project" value="TreeGrafter"/>
</dbReference>
<dbReference type="GO" id="GO:1903600">
    <property type="term" value="C:glutaminase complex"/>
    <property type="evidence" value="ECO:0007669"/>
    <property type="project" value="TreeGrafter"/>
</dbReference>
<dbReference type="GO" id="GO:0004359">
    <property type="term" value="F:glutaminase activity"/>
    <property type="evidence" value="ECO:0007669"/>
    <property type="project" value="UniProtKB-UniRule"/>
</dbReference>
<dbReference type="GO" id="GO:0036381">
    <property type="term" value="F:pyridoxal 5'-phosphate synthase (glutamine hydrolysing) activity"/>
    <property type="evidence" value="ECO:0007669"/>
    <property type="project" value="UniProtKB-UniRule"/>
</dbReference>
<dbReference type="GO" id="GO:0006543">
    <property type="term" value="P:glutamine catabolic process"/>
    <property type="evidence" value="ECO:0007669"/>
    <property type="project" value="UniProtKB-UniRule"/>
</dbReference>
<dbReference type="GO" id="GO:0042823">
    <property type="term" value="P:pyridoxal phosphate biosynthetic process"/>
    <property type="evidence" value="ECO:0007669"/>
    <property type="project" value="UniProtKB-UniRule"/>
</dbReference>
<dbReference type="GO" id="GO:0008614">
    <property type="term" value="P:pyridoxine metabolic process"/>
    <property type="evidence" value="ECO:0007669"/>
    <property type="project" value="TreeGrafter"/>
</dbReference>
<dbReference type="CDD" id="cd01749">
    <property type="entry name" value="GATase1_PB"/>
    <property type="match status" value="1"/>
</dbReference>
<dbReference type="FunFam" id="3.40.50.880:FF:000041">
    <property type="entry name" value="Glutamine amidotransferase subunit pdxT, putative"/>
    <property type="match status" value="1"/>
</dbReference>
<dbReference type="Gene3D" id="3.40.50.880">
    <property type="match status" value="1"/>
</dbReference>
<dbReference type="HAMAP" id="MF_01615">
    <property type="entry name" value="PdxT"/>
    <property type="match status" value="1"/>
</dbReference>
<dbReference type="InterPro" id="IPR029062">
    <property type="entry name" value="Class_I_gatase-like"/>
</dbReference>
<dbReference type="InterPro" id="IPR002161">
    <property type="entry name" value="PdxT/SNO"/>
</dbReference>
<dbReference type="InterPro" id="IPR021196">
    <property type="entry name" value="PdxT/SNO_CS"/>
</dbReference>
<dbReference type="NCBIfam" id="TIGR03800">
    <property type="entry name" value="PLP_synth_Pdx2"/>
    <property type="match status" value="1"/>
</dbReference>
<dbReference type="PANTHER" id="PTHR31559">
    <property type="entry name" value="PYRIDOXAL 5'-PHOSPHATE SYNTHASE SUBUNIT SNO"/>
    <property type="match status" value="1"/>
</dbReference>
<dbReference type="PANTHER" id="PTHR31559:SF0">
    <property type="entry name" value="PYRIDOXAL 5'-PHOSPHATE SYNTHASE SUBUNIT SNO1-RELATED"/>
    <property type="match status" value="1"/>
</dbReference>
<dbReference type="Pfam" id="PF01174">
    <property type="entry name" value="SNO"/>
    <property type="match status" value="1"/>
</dbReference>
<dbReference type="PIRSF" id="PIRSF005639">
    <property type="entry name" value="Glut_amidoT_SNO"/>
    <property type="match status" value="1"/>
</dbReference>
<dbReference type="SUPFAM" id="SSF52317">
    <property type="entry name" value="Class I glutamine amidotransferase-like"/>
    <property type="match status" value="1"/>
</dbReference>
<dbReference type="PROSITE" id="PS01236">
    <property type="entry name" value="PDXT_SNO_1"/>
    <property type="match status" value="1"/>
</dbReference>
<dbReference type="PROSITE" id="PS51130">
    <property type="entry name" value="PDXT_SNO_2"/>
    <property type="match status" value="1"/>
</dbReference>
<proteinExistence type="inferred from homology"/>
<accession>Q465J4</accession>
<evidence type="ECO:0000255" key="1">
    <source>
        <dbReference type="HAMAP-Rule" id="MF_01615"/>
    </source>
</evidence>
<organism>
    <name type="scientific">Methanosarcina barkeri (strain Fusaro / DSM 804)</name>
    <dbReference type="NCBI Taxonomy" id="269797"/>
    <lineage>
        <taxon>Archaea</taxon>
        <taxon>Methanobacteriati</taxon>
        <taxon>Methanobacteriota</taxon>
        <taxon>Stenosarchaea group</taxon>
        <taxon>Methanomicrobia</taxon>
        <taxon>Methanosarcinales</taxon>
        <taxon>Methanosarcinaceae</taxon>
        <taxon>Methanosarcina</taxon>
    </lineage>
</organism>
<feature type="chain" id="PRO_0000255822" description="Pyridoxal 5'-phosphate synthase subunit PdxT">
    <location>
        <begin position="1"/>
        <end position="200"/>
    </location>
</feature>
<feature type="active site" description="Nucleophile" evidence="1">
    <location>
        <position position="84"/>
    </location>
</feature>
<feature type="active site" description="Charge relay system" evidence="1">
    <location>
        <position position="179"/>
    </location>
</feature>
<feature type="active site" description="Charge relay system" evidence="1">
    <location>
        <position position="181"/>
    </location>
</feature>
<feature type="binding site" evidence="1">
    <location>
        <begin position="52"/>
        <end position="54"/>
    </location>
    <ligand>
        <name>L-glutamine</name>
        <dbReference type="ChEBI" id="CHEBI:58359"/>
    </ligand>
</feature>
<feature type="binding site" evidence="1">
    <location>
        <position position="115"/>
    </location>
    <ligand>
        <name>L-glutamine</name>
        <dbReference type="ChEBI" id="CHEBI:58359"/>
    </ligand>
</feature>
<feature type="binding site" evidence="1">
    <location>
        <begin position="143"/>
        <end position="144"/>
    </location>
    <ligand>
        <name>L-glutamine</name>
        <dbReference type="ChEBI" id="CHEBI:58359"/>
    </ligand>
</feature>
<name>PDXT_METBF</name>